<name>MYG2_STEAT</name>
<comment type="function">
    <text evidence="1">Monomeric heme protein which primary function is to store oxygen and facilitate its diffusion within muscle tissues. Reversibly binds oxygen through a pentacoordinated heme iron and enables its timely and efficient release as needed during periods of heightened demand. Depending on the oxidative conditions of tissues and cells, and in addition to its ability to bind oxygen, it also has a nitrite reductase activity whereby it regulates the production of bioactive nitric oxide. Under stress conditions, like hypoxia and anoxia, it also protects cells against reactive oxygen species thanks to its pseudoperoxidase activity.</text>
</comment>
<comment type="catalytic activity">
    <reaction evidence="1">
        <text>Fe(III)-heme b-[protein] + nitric oxide + H2O = Fe(II)-heme b-[protein] + nitrite + 2 H(+)</text>
        <dbReference type="Rhea" id="RHEA:77711"/>
        <dbReference type="Rhea" id="RHEA-COMP:18975"/>
        <dbReference type="Rhea" id="RHEA-COMP:18976"/>
        <dbReference type="ChEBI" id="CHEBI:15377"/>
        <dbReference type="ChEBI" id="CHEBI:15378"/>
        <dbReference type="ChEBI" id="CHEBI:16301"/>
        <dbReference type="ChEBI" id="CHEBI:16480"/>
        <dbReference type="ChEBI" id="CHEBI:55376"/>
        <dbReference type="ChEBI" id="CHEBI:60344"/>
    </reaction>
    <physiologicalReaction direction="right-to-left" evidence="1">
        <dbReference type="Rhea" id="RHEA:77713"/>
    </physiologicalReaction>
</comment>
<comment type="catalytic activity">
    <reaction evidence="1">
        <text>H2O2 + AH2 = A + 2 H2O</text>
        <dbReference type="Rhea" id="RHEA:30275"/>
        <dbReference type="ChEBI" id="CHEBI:13193"/>
        <dbReference type="ChEBI" id="CHEBI:15377"/>
        <dbReference type="ChEBI" id="CHEBI:16240"/>
        <dbReference type="ChEBI" id="CHEBI:17499"/>
    </reaction>
</comment>
<comment type="subunit">
    <text evidence="2">Monomeric.</text>
</comment>
<comment type="subcellular location">
    <subcellularLocation>
        <location evidence="1">Cytoplasm</location>
        <location evidence="1">Sarcoplasm</location>
    </subcellularLocation>
</comment>
<comment type="similarity">
    <text evidence="5">Belongs to the globin family.</text>
</comment>
<sequence length="154" mass="17232">MGLSDGEWQLVLNVWGKVEADLAGHGQDVLIRLFKGHPETLEKFDKFKHLKTEADMKASEDLKKHGNTVLTALGAILKKKGHHDAELKPLAQSHATKHKIPIKYLEFISEAIIHVLHSRHPAEFGADAQAAMNKALELFRKDIATKYKELGFHG</sequence>
<proteinExistence type="evidence at transcript level"/>
<feature type="chain" id="PRO_0000261584" description="Myoglobin-2">
    <location>
        <begin position="1"/>
        <end position="154"/>
    </location>
</feature>
<feature type="domain" description="Globin" evidence="5">
    <location>
        <begin position="2"/>
        <end position="148"/>
    </location>
</feature>
<feature type="binding site" evidence="4">
    <location>
        <position position="65"/>
    </location>
    <ligand>
        <name>nitrite</name>
        <dbReference type="ChEBI" id="CHEBI:16301"/>
    </ligand>
</feature>
<feature type="binding site" evidence="3 5">
    <location>
        <position position="65"/>
    </location>
    <ligand>
        <name>O2</name>
        <dbReference type="ChEBI" id="CHEBI:15379"/>
    </ligand>
</feature>
<feature type="binding site" description="proximal binding residue" evidence="1">
    <location>
        <position position="94"/>
    </location>
    <ligand>
        <name>heme b</name>
        <dbReference type="ChEBI" id="CHEBI:60344"/>
    </ligand>
    <ligandPart>
        <name>Fe</name>
        <dbReference type="ChEBI" id="CHEBI:18248"/>
    </ligandPart>
</feature>
<evidence type="ECO:0000250" key="1">
    <source>
        <dbReference type="UniProtKB" id="P02144"/>
    </source>
</evidence>
<evidence type="ECO:0000250" key="2">
    <source>
        <dbReference type="UniProtKB" id="P02185"/>
    </source>
</evidence>
<evidence type="ECO:0000250" key="3">
    <source>
        <dbReference type="UniProtKB" id="P02189"/>
    </source>
</evidence>
<evidence type="ECO:0000250" key="4">
    <source>
        <dbReference type="UniProtKB" id="P68082"/>
    </source>
</evidence>
<evidence type="ECO:0000255" key="5">
    <source>
        <dbReference type="PROSITE-ProRule" id="PRU00238"/>
    </source>
</evidence>
<organism>
    <name type="scientific">Stenella attenuata</name>
    <name type="common">Pantropical spotted dolphin</name>
    <name type="synonym">Steno attenuatus</name>
    <dbReference type="NCBI Taxonomy" id="9735"/>
    <lineage>
        <taxon>Eukaryota</taxon>
        <taxon>Metazoa</taxon>
        <taxon>Chordata</taxon>
        <taxon>Craniata</taxon>
        <taxon>Vertebrata</taxon>
        <taxon>Euteleostomi</taxon>
        <taxon>Mammalia</taxon>
        <taxon>Eutheria</taxon>
        <taxon>Laurasiatheria</taxon>
        <taxon>Artiodactyla</taxon>
        <taxon>Whippomorpha</taxon>
        <taxon>Cetacea</taxon>
        <taxon>Odontoceti</taxon>
        <taxon>Delphinidae</taxon>
        <taxon>Stenella</taxon>
    </lineage>
</organism>
<reference key="1">
    <citation type="journal article" date="2006" name="Comp. Biochem. Physiol.">
        <title>cDNA-derived amino acid sequences of myoglobins from nine species of whales and dolphins.</title>
        <authorList>
            <person name="Iwanami K."/>
            <person name="Mita H."/>
            <person name="Yamamoto Y."/>
            <person name="Fujise Y."/>
            <person name="Yamada T."/>
            <person name="Suzuki T."/>
        </authorList>
    </citation>
    <scope>NUCLEOTIDE SEQUENCE [MRNA]</scope>
</reference>
<keyword id="KW-0963">Cytoplasm</keyword>
<keyword id="KW-0349">Heme</keyword>
<keyword id="KW-0408">Iron</keyword>
<keyword id="KW-0479">Metal-binding</keyword>
<keyword id="KW-0514">Muscle protein</keyword>
<keyword id="KW-0560">Oxidoreductase</keyword>
<keyword id="KW-0561">Oxygen transport</keyword>
<keyword id="KW-0813">Transport</keyword>
<protein>
    <recommendedName>
        <fullName>Myoglobin-2</fullName>
    </recommendedName>
    <alternativeName>
        <fullName evidence="1">Nitrite reductase MB</fullName>
        <ecNumber evidence="1">1.7.-.-</ecNumber>
    </alternativeName>
    <alternativeName>
        <fullName evidence="1">Pseudoperoxidase MB</fullName>
        <ecNumber evidence="1">1.11.1.-</ecNumber>
    </alternativeName>
</protein>
<dbReference type="EC" id="1.7.-.-" evidence="1"/>
<dbReference type="EC" id="1.11.1.-" evidence="1"/>
<dbReference type="EMBL" id="AB271146">
    <property type="protein sequence ID" value="BAF03581.1"/>
    <property type="molecule type" value="mRNA"/>
</dbReference>
<dbReference type="SMR" id="Q0KIY6"/>
<dbReference type="GO" id="GO:0070062">
    <property type="term" value="C:extracellular exosome"/>
    <property type="evidence" value="ECO:0007669"/>
    <property type="project" value="TreeGrafter"/>
</dbReference>
<dbReference type="GO" id="GO:0016528">
    <property type="term" value="C:sarcoplasm"/>
    <property type="evidence" value="ECO:0000250"/>
    <property type="project" value="UniProtKB"/>
</dbReference>
<dbReference type="GO" id="GO:0020037">
    <property type="term" value="F:heme binding"/>
    <property type="evidence" value="ECO:0007669"/>
    <property type="project" value="InterPro"/>
</dbReference>
<dbReference type="GO" id="GO:0046872">
    <property type="term" value="F:metal ion binding"/>
    <property type="evidence" value="ECO:0007669"/>
    <property type="project" value="UniProtKB-KW"/>
</dbReference>
<dbReference type="GO" id="GO:0098809">
    <property type="term" value="F:nitrite reductase activity"/>
    <property type="evidence" value="ECO:0000250"/>
    <property type="project" value="UniProtKB"/>
</dbReference>
<dbReference type="GO" id="GO:0019825">
    <property type="term" value="F:oxygen binding"/>
    <property type="evidence" value="ECO:0007669"/>
    <property type="project" value="InterPro"/>
</dbReference>
<dbReference type="GO" id="GO:0005344">
    <property type="term" value="F:oxygen carrier activity"/>
    <property type="evidence" value="ECO:0000250"/>
    <property type="project" value="UniProtKB"/>
</dbReference>
<dbReference type="GO" id="GO:0004601">
    <property type="term" value="F:peroxidase activity"/>
    <property type="evidence" value="ECO:0000250"/>
    <property type="project" value="UniProtKB"/>
</dbReference>
<dbReference type="GO" id="GO:0019430">
    <property type="term" value="P:removal of superoxide radicals"/>
    <property type="evidence" value="ECO:0000250"/>
    <property type="project" value="UniProtKB"/>
</dbReference>
<dbReference type="CDD" id="cd08926">
    <property type="entry name" value="Mb"/>
    <property type="match status" value="1"/>
</dbReference>
<dbReference type="Gene3D" id="6.10.140.2100">
    <property type="match status" value="1"/>
</dbReference>
<dbReference type="Gene3D" id="6.10.140.2110">
    <property type="match status" value="1"/>
</dbReference>
<dbReference type="InterPro" id="IPR000971">
    <property type="entry name" value="Globin"/>
</dbReference>
<dbReference type="InterPro" id="IPR009050">
    <property type="entry name" value="Globin-like_sf"/>
</dbReference>
<dbReference type="InterPro" id="IPR002335">
    <property type="entry name" value="Myoglobin"/>
</dbReference>
<dbReference type="PANTHER" id="PTHR47132">
    <property type="entry name" value="MYOGLOBIN"/>
    <property type="match status" value="1"/>
</dbReference>
<dbReference type="PANTHER" id="PTHR47132:SF1">
    <property type="entry name" value="MYOGLOBIN"/>
    <property type="match status" value="1"/>
</dbReference>
<dbReference type="Pfam" id="PF00042">
    <property type="entry name" value="Globin"/>
    <property type="match status" value="1"/>
</dbReference>
<dbReference type="PRINTS" id="PR00613">
    <property type="entry name" value="MYOGLOBIN"/>
</dbReference>
<dbReference type="SUPFAM" id="SSF46458">
    <property type="entry name" value="Globin-like"/>
    <property type="match status" value="1"/>
</dbReference>
<dbReference type="PROSITE" id="PS01033">
    <property type="entry name" value="GLOBIN"/>
    <property type="match status" value="1"/>
</dbReference>
<gene>
    <name type="primary">MB2</name>
</gene>
<accession>Q0KIY6</accession>